<reference key="1">
    <citation type="journal article" date="2001" name="Biochim. Biophys. Acta">
        <title>Cloning, sequencing and expression in the seeds and radicles of two Lupinus albus conglutin gamma genes.</title>
        <authorList>
            <person name="Scarafoni A."/>
            <person name="Di Cataldo A."/>
            <person name="Vassilevskaia T.D."/>
            <person name="Bekman E.P."/>
            <person name="Rodrigues-Pousada C."/>
            <person name="Ceciliani F."/>
            <person name="Duranti M."/>
        </authorList>
    </citation>
    <scope>NUCLEOTIDE SEQUENCE [GENOMIC DNA]</scope>
    <scope>PROTEIN SEQUENCE OF 34-60; 69-81; 98-136; 197-212; 301-307 AND 346-352</scope>
    <scope>PROTEOLYTIC CLEAVAGE</scope>
    <scope>TISSUE SPECIFICITY</scope>
    <scope>INDUCTION BY HEAT</scope>
    <scope>SUBCELLULAR LOCATION</scope>
    <scope>FUNCTION</scope>
    <scope>DEVELOPMENTAL STAGE</scope>
    <source>
        <strain>cv. Ultra</strain>
    </source>
</reference>
<reference key="2">
    <citation type="journal article" date="2010" name="Int. J. Biol. Macromol.">
        <title>Spectroscopic studies on the pH-dependent structural dynamics of gamma-conglutin, the blood glucose-lowering protein of lupin seeds.</title>
        <authorList>
            <person name="Capraro J."/>
            <person name="Spotti P."/>
            <person name="Magni C."/>
            <person name="Scarafoni A."/>
            <person name="Duranti M."/>
        </authorList>
    </citation>
    <scope>SUBUNIT</scope>
    <source>
        <tissue>Seed</tissue>
    </source>
</reference>
<reference key="3">
    <citation type="journal article" date="2010" name="Phytochemistry">
        <title>gamma-Conglutin, the Lupinus albus XEGIP-like protein, whose expression is elicited by chitosan, lacks of the typical inhibitory activity against GH12 endo-glucanases.</title>
        <authorList>
            <person name="Scarafoni A."/>
            <person name="Ronchi A."/>
            <person name="Duranti M."/>
        </authorList>
    </citation>
    <scope>INDUCTION BY CHITOSAN</scope>
    <scope>CAUTION</scope>
    <source>
        <strain>cv. Multitalia</strain>
    </source>
</reference>
<reference key="4">
    <citation type="journal article" date="2011" name="Fitoterapia">
        <title>Hypoglycemic effect of lupin seed gamma-conglutin in experimental animals and healthy human subjects.</title>
        <authorList>
            <person name="Bertoglio J.C."/>
            <person name="Calvo M.A."/>
            <person name="Hancke J.L."/>
            <person name="Burgos R.A."/>
            <person name="Riva A."/>
            <person name="Morazzoni P."/>
            <person name="Ponzone C."/>
            <person name="Magni C."/>
            <person name="Duranti M."/>
        </authorList>
    </citation>
    <scope>BIOTECHNOLOGY</scope>
    <scope>MISCELLANEOUS</scope>
</reference>
<reference key="5">
    <citation type="journal article" date="2012" name="Br. J. Nutr.">
        <title>Lupin seed gamma-conglutin lowers blood glucose in hyperglycaemic rats and increases glucose consumption of HepG2 cells.</title>
        <authorList>
            <person name="Lovati M.R."/>
            <person name="Manzoni C."/>
            <person name="Castiglioni S."/>
            <person name="Parolari A."/>
            <person name="Magni C."/>
            <person name="Duranti M."/>
        </authorList>
    </citation>
    <scope>BIOTECHNOLOGY</scope>
    <scope>MISCELLANEOUS</scope>
    <scope>SUBUNIT</scope>
    <source>
        <strain>cv. Multitalia</strain>
    </source>
</reference>
<reference key="6">
    <citation type="journal article" date="2013" name="Biochem. Biophys. Res. Commun.">
        <title>Internalisation and multiple phosphorylation of gamma-Conglutin, the lupin seed glycaemia-lowering protein, in HepG2 cells.</title>
        <authorList>
            <person name="Capraro J."/>
            <person name="Magni C."/>
            <person name="Faoro F."/>
            <person name="Maffi D."/>
            <person name="Scarafoni A."/>
            <person name="Tedeschi G."/>
            <person name="Maffioli E."/>
            <person name="Parolari A."/>
            <person name="Manzoni C."/>
            <person name="Lovati M.R."/>
            <person name="Duranti M."/>
        </authorList>
    </citation>
    <scope>BIOTECHNOLOGY</scope>
    <scope>MISCELLANEOUS</scope>
</reference>
<reference key="7">
    <citation type="journal article" date="2013" name="PLoS ONE">
        <title>In-depth glycoproteomic characterization of gamma-conglutin by high-resolution accurate mass spectrometry.</title>
        <authorList>
            <person name="Schiarea S."/>
            <person name="Arnoldi L."/>
            <person name="Fanelli R."/>
            <person name="De Combarieu E."/>
            <person name="Chiabrando C."/>
        </authorList>
    </citation>
    <scope>GLYCOSYLATION AT ASN-131</scope>
    <scope>PTM</scope>
    <scope>IDENTIFICATION BY MASS SPECTROMETRY</scope>
</reference>
<reference key="8">
    <citation type="journal article" date="2014" name="Food Funct.">
        <title>Pasta supplemented with isolated lupin protein fractions reduces body weight gain and food intake of rats and decreases plasma glucose concentration upon glucose overload trial.</title>
        <authorList>
            <person name="Capraro J."/>
            <person name="Magni C."/>
            <person name="Scarafoni A."/>
            <person name="Caramanico R."/>
            <person name="Rossi F."/>
            <person name="Morlacchini M."/>
            <person name="Duranti M."/>
        </authorList>
    </citation>
    <scope>BIOTECHNOLOGY</scope>
    <scope>MISCELLANEOUS</scope>
    <source>
        <strain>cv. Multitalia</strain>
    </source>
</reference>
<reference key="9">
    <citation type="journal article" date="2014" name="Plant Foods Hum. Nutr.">
        <title>Administration of Lupinus albus gamma conglutin (Cgamma) to n5 STZ rats augmented Ins-1 gene expression and pancreatic insulin content.</title>
        <authorList>
            <person name="Vargas-Guerrero B."/>
            <person name="Garcia-Lopez P.M."/>
            <person name="Martinez-Ayala A.L."/>
            <person name="Dominguez-Rosales J.A."/>
            <person name="Gurrola-Diaz C.M."/>
        </authorList>
    </citation>
    <scope>SUBUNIT</scope>
    <scope>BIOTECHNOLOGY</scope>
    <scope>MISCELLANEOUS</scope>
</reference>
<reference key="10">
    <citation type="journal article" date="2016" name="Plant Physiol. Biochem.">
        <title>Structural basis of the lack of endo-glucanase inhibitory activity of Lupinus albus gamma-conglutin.</title>
        <authorList>
            <person name="Scarafoni A."/>
            <person name="Consonni A."/>
            <person name="Pessina S."/>
            <person name="Balzaretti S."/>
            <person name="Capraro J."/>
            <person name="Galanti E."/>
            <person name="Duranti M."/>
        </authorList>
    </citation>
    <scope>FUNCTION</scope>
    <scope>MUTAGENESIS OF 360-SER--GLY-362 AND HIS-439</scope>
</reference>
<reference key="11">
    <citation type="journal article" date="2017" name="Plant Foods Hum. Nutr.">
        <title>Lupinus albus conglutin gamma modifies the gene expressions of enzymes involved in glucose hepatic production in vivo.</title>
        <authorList>
            <person name="Gonzalez-Santiago A.E."/>
            <person name="Vargas-Guerrero B."/>
            <person name="Garcia-Lopez P.M."/>
            <person name="Martinez-Ayala A.L."/>
            <person name="Dominguez-Rosales J.A."/>
            <person name="Gurrola-Diaz C.M."/>
        </authorList>
    </citation>
    <scope>BIOTECHNOLOGY</scope>
    <scope>MISCELLANEOUS</scope>
</reference>
<reference key="12">
    <citation type="journal article" date="2018" name="Biochim. Biophys. Acta">
        <title>Interaction of gamma-conglutin from Lupinus albus with model phospholipid membranes: Investigations on structure, thermal stability and oligomerization status.</title>
        <authorList>
            <person name="Scire A."/>
            <person name="Baldassarre M."/>
            <person name="Tanfani F."/>
            <person name="Capraro J."/>
            <person name="Duranti M."/>
            <person name="Scarafoni A."/>
        </authorList>
    </citation>
    <scope>FUNCTION</scope>
    <scope>SUBUNIT</scope>
</reference>
<evidence type="ECO:0000250" key="1">
    <source>
        <dbReference type="UniProtKB" id="Q42369"/>
    </source>
</evidence>
<evidence type="ECO:0000255" key="2">
    <source>
        <dbReference type="PROSITE-ProRule" id="PRU00498"/>
    </source>
</evidence>
<evidence type="ECO:0000255" key="3">
    <source>
        <dbReference type="PROSITE-ProRule" id="PRU01103"/>
    </source>
</evidence>
<evidence type="ECO:0000269" key="4">
    <source>
    </source>
</evidence>
<evidence type="ECO:0000269" key="5">
    <source>
    </source>
</evidence>
<evidence type="ECO:0000269" key="6">
    <source>
    </source>
</evidence>
<evidence type="ECO:0000269" key="7">
    <source>
    </source>
</evidence>
<evidence type="ECO:0000269" key="8">
    <source>
    </source>
</evidence>
<evidence type="ECO:0000269" key="9">
    <source>
    </source>
</evidence>
<evidence type="ECO:0000269" key="10">
    <source>
    </source>
</evidence>
<evidence type="ECO:0000269" key="11">
    <source>
    </source>
</evidence>
<evidence type="ECO:0000269" key="12">
    <source>
    </source>
</evidence>
<evidence type="ECO:0000269" key="13">
    <source>
    </source>
</evidence>
<evidence type="ECO:0000269" key="14">
    <source>
    </source>
</evidence>
<evidence type="ECO:0000269" key="15">
    <source>
    </source>
</evidence>
<evidence type="ECO:0000303" key="16">
    <source>
    </source>
</evidence>
<evidence type="ECO:0000303" key="17">
    <source>
    </source>
</evidence>
<evidence type="ECO:0000305" key="18"/>
<evidence type="ECO:0000305" key="19">
    <source>
    </source>
</evidence>
<evidence type="ECO:0000305" key="20">
    <source>
    </source>
</evidence>
<proteinExistence type="evidence at protein level"/>
<comment type="function">
    <text evidence="13 15 16">Sulfur-rich seed storage protein that remains undegraded at germination (PubMed:11406286). The uncleaved form exhibits some inhibitory activity against GH11 xylanase from T.longibrachiatum, more at pH 7 than at pH 5.3, but not against GH12 xyloglucan-specific endoglucanase (XEG) from A.aculeatus (PubMed:26741537). Binds to model phospholipid membranes containing dimyristoyl phosphatidylglycerol (DMPG), dioleoyl phosphatidic acid (DOPA) or mixture of dimyristoyl phosphatidylcholine and dimyristoyl phosphatidylglycerol (DMPC:DMPG), or mixture of dioleoyl phosphatidic acid and dioleoyl phosphatidylcholine (DOPC:DOPA) (PubMed:30312772).</text>
</comment>
<comment type="subunit">
    <text evidence="1 6 8 12 15">Two-subunit monomeric unit made of alpha and beta subunits coupled by disulfide bonds (at pH 4.5 and under non-reducing conditions) (PubMed:20670643, PubMed:21733318, PubMed:24894193). Monomeric alpha and beta subunits in reducing conditions (PubMed:21733318, PubMed:24894193, PubMed:30312772). Can also form oligomers including dimer, tetramer and cyclic hexamer (trimer of dimers) (at pH &gt; 5.5) (PubMed:20670643, PubMed:30312772). Component of globulins complexes which accumulate in seeds (By similarity). Interacts with flavonoids (e.g. apigenin glucosides) present in globulins complexes (By similarity).</text>
</comment>
<comment type="subcellular location">
    <subcellularLocation>
        <location evidence="16">Secreted</location>
        <location evidence="16">Extracellular space</location>
    </subcellularLocation>
    <text evidence="16">Present in the extracellular spaces of germinating cotyledons and in the young roots.</text>
</comment>
<comment type="tissue specificity">
    <text evidence="4">Expressed in developing seeds and in the young roots and cotyledons of germinating seeds and young seedlings.</text>
</comment>
<comment type="developmental stage">
    <text evidence="4">Accumulates during seed development.</text>
</comment>
<comment type="induction">
    <text evidence="5 16">Secreted in high amounts upon heat treatment of mature seeds (PubMed:11406286). Strongly induced by chitosan in the cotyledons of germinating seeds (PubMed:19962718).</text>
</comment>
<comment type="PTM">
    <text evidence="10">Glycosylated on alpha chain at Asn-131; identified N-glycans bound are Man(2)(Xyl)(Fuc)GlcNAc(2), Man(3)(Xyl)(Fuc)GlcNAc(2), GlcNAcMan(3)(Xyl)(Fuc)GlcNAc(2) and GlcNAc(2)Man(3)(Xyl)(Fuc)GlcNAc(2).</text>
</comment>
<comment type="allergen">
    <text evidence="1">Causes an allergic reaction in human.</text>
</comment>
<comment type="biotechnology">
    <text evidence="7 8 9 11 12 14">Being internalized and phosphorylated in liver hepatocellular cells, stimulating pancreatic insulin accumulation, and exhibiting hypoglycemic effect on human and rat, may be used in antidiabetic therapies and diets (e.g. lupin flour or enriched pasta) for type 2 diabetes (T2D).</text>
</comment>
<comment type="miscellaneous">
    <text evidence="1">Resistant to pancreatin-mediated digestion.</text>
</comment>
<comment type="miscellaneous">
    <text evidence="7 8 9 11 12 14">Mediates a dose-dependent decrease of blood plasma glucose and increased Ins1 expression and pancreatic insulin levels in hyperglycaemic/diabetic rats daily fed with gamma conglutin 1 or supplemented pasta (PubMed:21605639, PubMed:21733318, PubMed:24394732, PubMed:24894193, PubMed:28101822). Involved in reducing rat hepatic glucose production, mainly through G6pc inhibition in impaired glucose metabolism disorders, but without leading to hypoglycemia (PubMed:28101822). Triggers an increased glucose consumption of human liver hepatocellular HepG2 cells and potentiates the activity of insulin and metformin in cell glucose consumption (PubMed:21733318). Internalized by and subsequently phosphorylated at Thr-69, Thr-182, Thr-331, Tyr-354, Ser-360 and Ser-442 in HepG2 cells cytoplasm (PubMed:23872149). Exhibits hypoglycemic effect when orally administered 30 minutes before carbohydrate supply in human trials, but insulin concentrations are not affected (PubMed:21605639).</text>
</comment>
<comment type="similarity">
    <text evidence="3">Belongs to the peptidase A1 family.</text>
</comment>
<comment type="caution">
    <text evidence="5">Despite homology with xyloglucan-specific endo-beta-1,4-glucanase inhibitor proteins (XEGIPs) and T.aestivum xylanase inhibitor (TAXI-I), fails to inhibit representative fungal endo-glucanases and other cell wall-degrading enzymes.</text>
</comment>
<comment type="online information" name="Protein Spotlight">
    <link uri="https://www.proteinspotlight.org/back_issues/211/"/>
    <text>Dark horse - Issue 211 of February 2019</text>
</comment>
<name>CONG1_LUPAL</name>
<dbReference type="EMBL" id="AJ297490">
    <property type="protein sequence ID" value="CAC16394.1"/>
    <property type="molecule type" value="Genomic_DNA"/>
</dbReference>
<dbReference type="SMR" id="Q9FSH9"/>
<dbReference type="Allergome" id="2686">
    <property type="allergen name" value="Lup a gamma_Conglutin"/>
</dbReference>
<dbReference type="GlyCosmos" id="Q9FSH9">
    <property type="glycosylation" value="1 site, No reported glycans"/>
</dbReference>
<dbReference type="iPTMnet" id="Q9FSH9"/>
<dbReference type="OrthoDB" id="1258937at2759"/>
<dbReference type="GO" id="GO:0005576">
    <property type="term" value="C:extracellular region"/>
    <property type="evidence" value="ECO:0007669"/>
    <property type="project" value="UniProtKB-SubCell"/>
</dbReference>
<dbReference type="GO" id="GO:0004190">
    <property type="term" value="F:aspartic-type endopeptidase activity"/>
    <property type="evidence" value="ECO:0007669"/>
    <property type="project" value="InterPro"/>
</dbReference>
<dbReference type="GO" id="GO:0004857">
    <property type="term" value="F:enzyme inhibitor activity"/>
    <property type="evidence" value="ECO:0000314"/>
    <property type="project" value="UniProtKB"/>
</dbReference>
<dbReference type="GO" id="GO:0043086">
    <property type="term" value="P:negative regulation of catalytic activity"/>
    <property type="evidence" value="ECO:0000314"/>
    <property type="project" value="UniProtKB"/>
</dbReference>
<dbReference type="GO" id="GO:0006508">
    <property type="term" value="P:proteolysis"/>
    <property type="evidence" value="ECO:0007669"/>
    <property type="project" value="InterPro"/>
</dbReference>
<dbReference type="CDD" id="cd05489">
    <property type="entry name" value="xylanase_inhibitor_I_like"/>
    <property type="match status" value="1"/>
</dbReference>
<dbReference type="FunFam" id="2.40.70.10:FF:000045">
    <property type="entry name" value="Basic 7S globulin"/>
    <property type="match status" value="1"/>
</dbReference>
<dbReference type="FunFam" id="2.40.70.10:FF:000126">
    <property type="entry name" value="Gamma conglutin 1"/>
    <property type="match status" value="1"/>
</dbReference>
<dbReference type="Gene3D" id="2.40.70.10">
    <property type="entry name" value="Acid Proteases"/>
    <property type="match status" value="2"/>
</dbReference>
<dbReference type="InterPro" id="IPR001461">
    <property type="entry name" value="Aspartic_peptidase_A1"/>
</dbReference>
<dbReference type="InterPro" id="IPR033121">
    <property type="entry name" value="PEPTIDASE_A1"/>
</dbReference>
<dbReference type="InterPro" id="IPR021109">
    <property type="entry name" value="Peptidase_aspartic_dom_sf"/>
</dbReference>
<dbReference type="InterPro" id="IPR032799">
    <property type="entry name" value="TAXi_C"/>
</dbReference>
<dbReference type="InterPro" id="IPR032861">
    <property type="entry name" value="TAXi_N"/>
</dbReference>
<dbReference type="InterPro" id="IPR033868">
    <property type="entry name" value="Xylanase_inhibitor_I-like"/>
</dbReference>
<dbReference type="PANTHER" id="PTHR47965">
    <property type="entry name" value="ASPARTYL PROTEASE-RELATED"/>
    <property type="match status" value="1"/>
</dbReference>
<dbReference type="PANTHER" id="PTHR47965:SF28">
    <property type="entry name" value="BASIC 7S GLOBULIN"/>
    <property type="match status" value="1"/>
</dbReference>
<dbReference type="Pfam" id="PF14541">
    <property type="entry name" value="TAXi_C"/>
    <property type="match status" value="1"/>
</dbReference>
<dbReference type="Pfam" id="PF14543">
    <property type="entry name" value="TAXi_N"/>
    <property type="match status" value="1"/>
</dbReference>
<dbReference type="SUPFAM" id="SSF50630">
    <property type="entry name" value="Acid proteases"/>
    <property type="match status" value="1"/>
</dbReference>
<dbReference type="PROSITE" id="PS51767">
    <property type="entry name" value="PEPTIDASE_A1"/>
    <property type="match status" value="1"/>
</dbReference>
<organism>
    <name type="scientific">Lupinus albus</name>
    <name type="common">White lupine</name>
    <name type="synonym">Lupinus termis</name>
    <dbReference type="NCBI Taxonomy" id="3870"/>
    <lineage>
        <taxon>Eukaryota</taxon>
        <taxon>Viridiplantae</taxon>
        <taxon>Streptophyta</taxon>
        <taxon>Embryophyta</taxon>
        <taxon>Tracheophyta</taxon>
        <taxon>Spermatophyta</taxon>
        <taxon>Magnoliopsida</taxon>
        <taxon>eudicotyledons</taxon>
        <taxon>Gunneridae</taxon>
        <taxon>Pentapetalae</taxon>
        <taxon>rosids</taxon>
        <taxon>fabids</taxon>
        <taxon>Fabales</taxon>
        <taxon>Fabaceae</taxon>
        <taxon>Papilionoideae</taxon>
        <taxon>50 kb inversion clade</taxon>
        <taxon>genistoids sensu lato</taxon>
        <taxon>core genistoids</taxon>
        <taxon>Genisteae</taxon>
        <taxon>Lupinus</taxon>
    </lineage>
</organism>
<keyword id="KW-0020">Allergen</keyword>
<keyword id="KW-0903">Direct protein sequencing</keyword>
<keyword id="KW-1015">Disulfide bond</keyword>
<keyword id="KW-0325">Glycoprotein</keyword>
<keyword id="KW-0964">Secreted</keyword>
<keyword id="KW-0732">Signal</keyword>
<accession>Q9FSH9</accession>
<protein>
    <recommendedName>
        <fullName evidence="18">Gamma conglutin 1</fullName>
    </recommendedName>
    <alternativeName>
        <fullName evidence="16">Conglutin gamma 32</fullName>
    </alternativeName>
    <allergenName evidence="18">Lup a gamma-conglutin</allergenName>
    <component>
        <recommendedName>
            <fullName evidence="18">Gamma conglutin 1 beta subunit</fullName>
        </recommendedName>
        <alternativeName>
            <fullName evidence="20">Gamma conglutin 1 17 kDa subunit</fullName>
        </alternativeName>
        <alternativeName>
            <fullName evidence="19">Gamma conglutin 1 small subunit</fullName>
        </alternativeName>
    </component>
    <component>
        <recommendedName>
            <fullName evidence="18">Gamma conglutin 1 alpha subunit</fullName>
        </recommendedName>
        <alternativeName>
            <fullName evidence="20">Gamma conglutin 1 29 kDa subunit</fullName>
        </alternativeName>
        <alternativeName>
            <fullName evidence="19">Gamma conglutin 1 large subunit</fullName>
        </alternativeName>
    </component>
</protein>
<gene>
    <name evidence="17" type="primary">Cgamma</name>
</gene>
<sequence>MAKNMAPILHILVISLSYSFLFVTSSSQNSQSLYHNSQPTSSSKPNLLVLPIQQDASTKLHWGNILKRTPLMQVPVLLDLNGKHLWVTCSQHYSSSTYQAPFCHSTQCSRANTHQCFTCTDSTTSRPGCHNNTCGLISSNPVTQESGLGELAQDVLALHSTHGSKLGSLVKIPQFLFSCAPTFLTQKGLPNNVQGALGLGHAPISLPNQLFSHFGLKRQFTMCLSSYPTSNGAILFGDINDPNNNNYIHNSLDVLHDMVYTPLTISKQGEYFIQVSAIRVNKHMVIPTKNPSMFPSSSSSSYHESSEIGGAMITTTNPYTVLRHSIFEVFTQVFANNVPKQAQVKAVGPFGLCYDTKKISGGVPSVDLIMDKSDVVWRISGENLMVQAQDGVSCLGFVDGGVHTRAGIALGTHQLEENLVVFDLARSRVGFNTNSLKSHGKSCSNLFDLNNP</sequence>
<feature type="signal peptide" evidence="4">
    <location>
        <begin position="1"/>
        <end position="33"/>
    </location>
</feature>
<feature type="chain" id="PRO_5004329433" description="Gamma conglutin 1">
    <location>
        <begin position="34"/>
        <end position="452"/>
    </location>
</feature>
<feature type="chain" id="PRO_0000446144" description="Gamma conglutin 1 alpha subunit">
    <location>
        <begin position="34"/>
        <end position="300"/>
    </location>
</feature>
<feature type="chain" id="PRO_0000446145" description="Gamma conglutin 1 beta subunit">
    <location>
        <begin position="301"/>
        <end position="452"/>
    </location>
</feature>
<feature type="domain" description="Peptidase A1" evidence="3">
    <location>
        <begin position="61"/>
        <end position="432"/>
    </location>
</feature>
<feature type="site" description="Cleavage; alternate" evidence="4">
    <location>
        <begin position="296"/>
        <end position="297"/>
    </location>
</feature>
<feature type="site" description="Cleavage; alternate" evidence="4">
    <location>
        <begin position="298"/>
        <end position="299"/>
    </location>
</feature>
<feature type="site" description="Cleavage; partial" evidence="4">
    <location>
        <begin position="300"/>
        <end position="301"/>
    </location>
</feature>
<feature type="site" description="Required for inhibitory activity against GH11 glucanase" evidence="13">
    <location>
        <position position="439"/>
    </location>
</feature>
<feature type="glycosylation site" description="N-linked (GlcNAc...) asparagine" evidence="2 10">
    <location>
        <position position="131"/>
    </location>
</feature>
<feature type="disulfide bond" evidence="1">
    <location>
        <begin position="89"/>
        <end position="179"/>
    </location>
</feature>
<feature type="disulfide bond" evidence="1">
    <location>
        <begin position="103"/>
        <end position="116"/>
    </location>
</feature>
<feature type="disulfide bond" evidence="1">
    <location>
        <begin position="108"/>
        <end position="134"/>
    </location>
</feature>
<feature type="disulfide bond" evidence="1">
    <location>
        <begin position="119"/>
        <end position="129"/>
    </location>
</feature>
<feature type="disulfide bond" description="Interchain (between alpha and beta chains, with C-443 in beta chain)" evidence="1">
    <location>
        <position position="223"/>
    </location>
</feature>
<feature type="disulfide bond" evidence="1">
    <location>
        <begin position="353"/>
        <end position="394"/>
    </location>
</feature>
<feature type="disulfide bond" description="Interchain (between alpha and beta chains, with C-223 in alpha chain)" evidence="1">
    <location>
        <position position="443"/>
    </location>
</feature>
<feature type="mutagenesis site" description="In MuT; the uncleaved form exhibits some inhibitory activity against GH11 glucanase from T.longibrachiatum, both at pH 5.3 and pH 7, but not against GH12 xyloglucan-specific endoglucanase (XEG) from A.aculeatus. In MuT-H/S; loss of inhibitory activity against GH11 glucanase from T.longibrachiatum; when associated with S-439." evidence="13">
    <original>SGG</original>
    <variation>LGNNLGGYA</variation>
    <location>
        <begin position="360"/>
        <end position="362"/>
    </location>
</feature>
<feature type="mutagenesis site" description="In MuX; the uncleaved form exhibits some inhibitory activity against GH11 glucanase from T.longibrachiatum, more at pH 5.3 than at pH 7, but not against GH12 xyloglucan-specific endoglucanase (XEG) from A.aculeatus. In MuX-H/S; loss of inhibitory activity against GH11 glucanase from T.longibrachiatum; when associated with S-439." evidence="13">
    <original>SGG</original>
    <variation>VSTRVGPA</variation>
    <location>
        <begin position="360"/>
        <end position="362"/>
    </location>
</feature>
<feature type="mutagenesis site" description="In MuX-H/S; loss of inhibitory activity against GH11 glucanase from T.longibrachiatum; when associated with 360-VSTRVGPA-367. In MuT-H/S; loss of inhibitory activity against GH11 glucanase from T.longibrachiatum; when associated with 360-LGNNLGGYA-368." evidence="13">
    <original>H</original>
    <variation>S</variation>
    <location>
        <position position="439"/>
    </location>
</feature>